<feature type="chain" id="PRO_0000104175" description="Protein translocase subunit SecE">
    <location>
        <begin position="1"/>
        <end position="60"/>
    </location>
</feature>
<feature type="transmembrane region" description="Helical" evidence="1">
    <location>
        <begin position="31"/>
        <end position="51"/>
    </location>
</feature>
<comment type="function">
    <text evidence="1">Essential subunit of the Sec protein translocation channel SecYEG. Clamps together the 2 halves of SecY. May contact the channel plug during translocation.</text>
</comment>
<comment type="subunit">
    <text evidence="1">Component of the Sec protein translocase complex. Heterotrimer consisting of SecY, SecE and SecG subunits. The heterotrimers can form oligomers, although 1 heterotrimer is thought to be able to translocate proteins. Interacts with the ribosome. Interacts with SecDF, and other proteins may be involved. Interacts with SecA.</text>
</comment>
<comment type="subcellular location">
    <subcellularLocation>
        <location evidence="1">Cell membrane</location>
        <topology evidence="1">Single-pass membrane protein</topology>
    </subcellularLocation>
</comment>
<comment type="similarity">
    <text evidence="1">Belongs to the SecE/SEC61-gamma family.</text>
</comment>
<organism>
    <name type="scientific">Staphylococcus aureus (strain N315)</name>
    <dbReference type="NCBI Taxonomy" id="158879"/>
    <lineage>
        <taxon>Bacteria</taxon>
        <taxon>Bacillati</taxon>
        <taxon>Bacillota</taxon>
        <taxon>Bacilli</taxon>
        <taxon>Bacillales</taxon>
        <taxon>Staphylococcaceae</taxon>
        <taxon>Staphylococcus</taxon>
    </lineage>
</organism>
<reference key="1">
    <citation type="journal article" date="2001" name="Lancet">
        <title>Whole genome sequencing of meticillin-resistant Staphylococcus aureus.</title>
        <authorList>
            <person name="Kuroda M."/>
            <person name="Ohta T."/>
            <person name="Uchiyama I."/>
            <person name="Baba T."/>
            <person name="Yuzawa H."/>
            <person name="Kobayashi I."/>
            <person name="Cui L."/>
            <person name="Oguchi A."/>
            <person name="Aoki K."/>
            <person name="Nagai Y."/>
            <person name="Lian J.-Q."/>
            <person name="Ito T."/>
            <person name="Kanamori M."/>
            <person name="Matsumaru H."/>
            <person name="Maruyama A."/>
            <person name="Murakami H."/>
            <person name="Hosoyama A."/>
            <person name="Mizutani-Ui Y."/>
            <person name="Takahashi N.K."/>
            <person name="Sawano T."/>
            <person name="Inoue R."/>
            <person name="Kaito C."/>
            <person name="Sekimizu K."/>
            <person name="Hirakawa H."/>
            <person name="Kuhara S."/>
            <person name="Goto S."/>
            <person name="Yabuzaki J."/>
            <person name="Kanehisa M."/>
            <person name="Yamashita A."/>
            <person name="Oshima K."/>
            <person name="Furuya K."/>
            <person name="Yoshino C."/>
            <person name="Shiba T."/>
            <person name="Hattori M."/>
            <person name="Ogasawara N."/>
            <person name="Hayashi H."/>
            <person name="Hiramatsu K."/>
        </authorList>
    </citation>
    <scope>NUCLEOTIDE SEQUENCE [LARGE SCALE GENOMIC DNA]</scope>
    <source>
        <strain>N315</strain>
    </source>
</reference>
<proteinExistence type="inferred from homology"/>
<name>SECE_STAAN</name>
<accession>P0A0I2</accession>
<accession>O06442</accession>
<gene>
    <name evidence="1" type="primary">secE</name>
    <name type="ordered locus">SA0493</name>
</gene>
<sequence>MAKKESFFKGVKSEMEKTSWPTKEELFKYTVIVVSTVIFFLVFFYALDLGITALKNLLFG</sequence>
<evidence type="ECO:0000255" key="1">
    <source>
        <dbReference type="HAMAP-Rule" id="MF_00422"/>
    </source>
</evidence>
<protein>
    <recommendedName>
        <fullName evidence="1">Protein translocase subunit SecE</fullName>
    </recommendedName>
</protein>
<keyword id="KW-1003">Cell membrane</keyword>
<keyword id="KW-0472">Membrane</keyword>
<keyword id="KW-0653">Protein transport</keyword>
<keyword id="KW-0811">Translocation</keyword>
<keyword id="KW-0812">Transmembrane</keyword>
<keyword id="KW-1133">Transmembrane helix</keyword>
<keyword id="KW-0813">Transport</keyword>
<dbReference type="EMBL" id="BA000018">
    <property type="protein sequence ID" value="BAB41723.1"/>
    <property type="molecule type" value="Genomic_DNA"/>
</dbReference>
<dbReference type="PIR" id="H89820">
    <property type="entry name" value="H89820"/>
</dbReference>
<dbReference type="RefSeq" id="WP_001074473.1">
    <property type="nucleotide sequence ID" value="NC_002745.2"/>
</dbReference>
<dbReference type="SMR" id="P0A0I2"/>
<dbReference type="EnsemblBacteria" id="BAB41723">
    <property type="protein sequence ID" value="BAB41723"/>
    <property type="gene ID" value="BAB41723"/>
</dbReference>
<dbReference type="GeneID" id="98344869"/>
<dbReference type="KEGG" id="sau:SA0493"/>
<dbReference type="HOGENOM" id="CLU_113663_8_2_9"/>
<dbReference type="GO" id="GO:0005886">
    <property type="term" value="C:plasma membrane"/>
    <property type="evidence" value="ECO:0007669"/>
    <property type="project" value="UniProtKB-SubCell"/>
</dbReference>
<dbReference type="GO" id="GO:0008320">
    <property type="term" value="F:protein transmembrane transporter activity"/>
    <property type="evidence" value="ECO:0007669"/>
    <property type="project" value="UniProtKB-UniRule"/>
</dbReference>
<dbReference type="GO" id="GO:0065002">
    <property type="term" value="P:intracellular protein transmembrane transport"/>
    <property type="evidence" value="ECO:0007669"/>
    <property type="project" value="UniProtKB-UniRule"/>
</dbReference>
<dbReference type="GO" id="GO:0009306">
    <property type="term" value="P:protein secretion"/>
    <property type="evidence" value="ECO:0007669"/>
    <property type="project" value="UniProtKB-UniRule"/>
</dbReference>
<dbReference type="GO" id="GO:0006605">
    <property type="term" value="P:protein targeting"/>
    <property type="evidence" value="ECO:0007669"/>
    <property type="project" value="UniProtKB-UniRule"/>
</dbReference>
<dbReference type="GO" id="GO:0043952">
    <property type="term" value="P:protein transport by the Sec complex"/>
    <property type="evidence" value="ECO:0007669"/>
    <property type="project" value="UniProtKB-UniRule"/>
</dbReference>
<dbReference type="Gene3D" id="1.20.5.1030">
    <property type="entry name" value="Preprotein translocase secy subunit"/>
    <property type="match status" value="1"/>
</dbReference>
<dbReference type="HAMAP" id="MF_00422">
    <property type="entry name" value="SecE"/>
    <property type="match status" value="1"/>
</dbReference>
<dbReference type="InterPro" id="IPR005807">
    <property type="entry name" value="SecE_bac"/>
</dbReference>
<dbReference type="InterPro" id="IPR038379">
    <property type="entry name" value="SecE_sf"/>
</dbReference>
<dbReference type="InterPro" id="IPR001901">
    <property type="entry name" value="Translocase_SecE/Sec61-g"/>
</dbReference>
<dbReference type="NCBIfam" id="TIGR00964">
    <property type="entry name" value="secE_bact"/>
    <property type="match status" value="1"/>
</dbReference>
<dbReference type="PANTHER" id="PTHR33910">
    <property type="entry name" value="PROTEIN TRANSLOCASE SUBUNIT SECE"/>
    <property type="match status" value="1"/>
</dbReference>
<dbReference type="PANTHER" id="PTHR33910:SF1">
    <property type="entry name" value="PROTEIN TRANSLOCASE SUBUNIT SECE"/>
    <property type="match status" value="1"/>
</dbReference>
<dbReference type="Pfam" id="PF00584">
    <property type="entry name" value="SecE"/>
    <property type="match status" value="1"/>
</dbReference>
<dbReference type="PROSITE" id="PS01067">
    <property type="entry name" value="SECE_SEC61G"/>
    <property type="match status" value="1"/>
</dbReference>